<feature type="chain" id="PRO_1000213998" description="GTP 3',8-cyclase">
    <location>
        <begin position="1"/>
        <end position="329"/>
    </location>
</feature>
<feature type="domain" description="Radical SAM core" evidence="2">
    <location>
        <begin position="8"/>
        <end position="229"/>
    </location>
</feature>
<feature type="binding site" evidence="1">
    <location>
        <position position="17"/>
    </location>
    <ligand>
        <name>GTP</name>
        <dbReference type="ChEBI" id="CHEBI:37565"/>
    </ligand>
</feature>
<feature type="binding site" evidence="1">
    <location>
        <position position="24"/>
    </location>
    <ligand>
        <name>[4Fe-4S] cluster</name>
        <dbReference type="ChEBI" id="CHEBI:49883"/>
        <label>1</label>
        <note>4Fe-4S-S-AdoMet</note>
    </ligand>
</feature>
<feature type="binding site" evidence="1">
    <location>
        <position position="28"/>
    </location>
    <ligand>
        <name>[4Fe-4S] cluster</name>
        <dbReference type="ChEBI" id="CHEBI:49883"/>
        <label>1</label>
        <note>4Fe-4S-S-AdoMet</note>
    </ligand>
</feature>
<feature type="binding site" evidence="1">
    <location>
        <position position="30"/>
    </location>
    <ligand>
        <name>S-adenosyl-L-methionine</name>
        <dbReference type="ChEBI" id="CHEBI:59789"/>
    </ligand>
</feature>
<feature type="binding site" evidence="1">
    <location>
        <position position="31"/>
    </location>
    <ligand>
        <name>[4Fe-4S] cluster</name>
        <dbReference type="ChEBI" id="CHEBI:49883"/>
        <label>1</label>
        <note>4Fe-4S-S-AdoMet</note>
    </ligand>
</feature>
<feature type="binding site" evidence="1">
    <location>
        <position position="68"/>
    </location>
    <ligand>
        <name>GTP</name>
        <dbReference type="ChEBI" id="CHEBI:37565"/>
    </ligand>
</feature>
<feature type="binding site" evidence="1">
    <location>
        <position position="72"/>
    </location>
    <ligand>
        <name>S-adenosyl-L-methionine</name>
        <dbReference type="ChEBI" id="CHEBI:59789"/>
    </ligand>
</feature>
<feature type="binding site" evidence="1">
    <location>
        <position position="99"/>
    </location>
    <ligand>
        <name>GTP</name>
        <dbReference type="ChEBI" id="CHEBI:37565"/>
    </ligand>
</feature>
<feature type="binding site" evidence="1">
    <location>
        <position position="123"/>
    </location>
    <ligand>
        <name>S-adenosyl-L-methionine</name>
        <dbReference type="ChEBI" id="CHEBI:59789"/>
    </ligand>
</feature>
<feature type="binding site" evidence="1">
    <location>
        <position position="160"/>
    </location>
    <ligand>
        <name>GTP</name>
        <dbReference type="ChEBI" id="CHEBI:37565"/>
    </ligand>
</feature>
<feature type="binding site" evidence="1">
    <location>
        <position position="194"/>
    </location>
    <ligand>
        <name>S-adenosyl-L-methionine</name>
        <dbReference type="ChEBI" id="CHEBI:59789"/>
    </ligand>
</feature>
<feature type="binding site" evidence="1">
    <location>
        <position position="257"/>
    </location>
    <ligand>
        <name>[4Fe-4S] cluster</name>
        <dbReference type="ChEBI" id="CHEBI:49883"/>
        <label>2</label>
        <note>4Fe-4S-substrate</note>
    </ligand>
</feature>
<feature type="binding site" evidence="1">
    <location>
        <position position="260"/>
    </location>
    <ligand>
        <name>[4Fe-4S] cluster</name>
        <dbReference type="ChEBI" id="CHEBI:49883"/>
        <label>2</label>
        <note>4Fe-4S-substrate</note>
    </ligand>
</feature>
<feature type="binding site" evidence="1">
    <location>
        <begin position="262"/>
        <end position="264"/>
    </location>
    <ligand>
        <name>GTP</name>
        <dbReference type="ChEBI" id="CHEBI:37565"/>
    </ligand>
</feature>
<feature type="binding site" evidence="1">
    <location>
        <position position="274"/>
    </location>
    <ligand>
        <name>[4Fe-4S] cluster</name>
        <dbReference type="ChEBI" id="CHEBI:49883"/>
        <label>2</label>
        <note>4Fe-4S-substrate</note>
    </ligand>
</feature>
<accession>C5B7H2</accession>
<sequence>MVSQLTDAFARTFYYLRLSVTDVCNFRCTYCLPGGYRPDSHGAKRFLSCDEIRRISHAFAALGTEKVRLTGGEPTLRRDFCDIVAAVRENSAIRTLAVTTNGYRMARDVGAWRDAGLTAINVSVDSLDARQFHAITGEDRFAQVMAGIDAAFDAGFGRIKVNTVLMRGVNDGSLQAFLHWIRRRPIQMRFIELMETGDGSELFRRHHVSGATIRTQLLAAGWQRRLPGRSDGPAQVFWHPDYLGEVGLIMPYEKNFCASCNRLRVSAVGNLHLCLFGEQGIALRDLLQEDAQQAALQVRIAAALRHKREGHFLHQGDSGHTQNLSFIGG</sequence>
<organism>
    <name type="scientific">Edwardsiella ictaluri (strain 93-146)</name>
    <dbReference type="NCBI Taxonomy" id="634503"/>
    <lineage>
        <taxon>Bacteria</taxon>
        <taxon>Pseudomonadati</taxon>
        <taxon>Pseudomonadota</taxon>
        <taxon>Gammaproteobacteria</taxon>
        <taxon>Enterobacterales</taxon>
        <taxon>Hafniaceae</taxon>
        <taxon>Edwardsiella</taxon>
    </lineage>
</organism>
<name>MOAA_EDWI9</name>
<protein>
    <recommendedName>
        <fullName evidence="1">GTP 3',8-cyclase</fullName>
        <ecNumber evidence="1">4.1.99.22</ecNumber>
    </recommendedName>
    <alternativeName>
        <fullName evidence="1">Molybdenum cofactor biosynthesis protein A</fullName>
    </alternativeName>
</protein>
<dbReference type="EC" id="4.1.99.22" evidence="1"/>
<dbReference type="EMBL" id="CP001600">
    <property type="protein sequence ID" value="ACR69808.1"/>
    <property type="molecule type" value="Genomic_DNA"/>
</dbReference>
<dbReference type="RefSeq" id="WP_015871916.1">
    <property type="nucleotide sequence ID" value="NZ_CP169062.1"/>
</dbReference>
<dbReference type="SMR" id="C5B7H2"/>
<dbReference type="STRING" id="67780.B6E78_05220"/>
<dbReference type="GeneID" id="69539540"/>
<dbReference type="KEGG" id="eic:NT01EI_2640"/>
<dbReference type="PATRIC" id="fig|634503.3.peg.2355"/>
<dbReference type="HOGENOM" id="CLU_009273_0_1_6"/>
<dbReference type="UniPathway" id="UPA00344"/>
<dbReference type="Proteomes" id="UP000001485">
    <property type="component" value="Chromosome"/>
</dbReference>
<dbReference type="GO" id="GO:0051539">
    <property type="term" value="F:4 iron, 4 sulfur cluster binding"/>
    <property type="evidence" value="ECO:0007669"/>
    <property type="project" value="UniProtKB-UniRule"/>
</dbReference>
<dbReference type="GO" id="GO:0061799">
    <property type="term" value="F:cyclic pyranopterin monophosphate synthase activity"/>
    <property type="evidence" value="ECO:0007669"/>
    <property type="project" value="TreeGrafter"/>
</dbReference>
<dbReference type="GO" id="GO:0061798">
    <property type="term" value="F:GTP 3',8'-cyclase activity"/>
    <property type="evidence" value="ECO:0007669"/>
    <property type="project" value="UniProtKB-UniRule"/>
</dbReference>
<dbReference type="GO" id="GO:0005525">
    <property type="term" value="F:GTP binding"/>
    <property type="evidence" value="ECO:0007669"/>
    <property type="project" value="UniProtKB-UniRule"/>
</dbReference>
<dbReference type="GO" id="GO:0046872">
    <property type="term" value="F:metal ion binding"/>
    <property type="evidence" value="ECO:0007669"/>
    <property type="project" value="UniProtKB-KW"/>
</dbReference>
<dbReference type="GO" id="GO:1904047">
    <property type="term" value="F:S-adenosyl-L-methionine binding"/>
    <property type="evidence" value="ECO:0007669"/>
    <property type="project" value="UniProtKB-UniRule"/>
</dbReference>
<dbReference type="GO" id="GO:0006777">
    <property type="term" value="P:Mo-molybdopterin cofactor biosynthetic process"/>
    <property type="evidence" value="ECO:0007669"/>
    <property type="project" value="UniProtKB-UniRule"/>
</dbReference>
<dbReference type="CDD" id="cd01335">
    <property type="entry name" value="Radical_SAM"/>
    <property type="match status" value="1"/>
</dbReference>
<dbReference type="CDD" id="cd21117">
    <property type="entry name" value="Twitch_MoaA"/>
    <property type="match status" value="1"/>
</dbReference>
<dbReference type="FunFam" id="3.20.20.70:FF:000057">
    <property type="entry name" value="GTP 3',8-cyclase"/>
    <property type="match status" value="1"/>
</dbReference>
<dbReference type="Gene3D" id="3.20.20.70">
    <property type="entry name" value="Aldolase class I"/>
    <property type="match status" value="1"/>
</dbReference>
<dbReference type="HAMAP" id="MF_01225_B">
    <property type="entry name" value="MoaA_B"/>
    <property type="match status" value="1"/>
</dbReference>
<dbReference type="InterPro" id="IPR013785">
    <property type="entry name" value="Aldolase_TIM"/>
</dbReference>
<dbReference type="InterPro" id="IPR006638">
    <property type="entry name" value="Elp3/MiaA/NifB-like_rSAM"/>
</dbReference>
<dbReference type="InterPro" id="IPR013483">
    <property type="entry name" value="MoaA"/>
</dbReference>
<dbReference type="InterPro" id="IPR000385">
    <property type="entry name" value="MoaA_NifB_PqqE_Fe-S-bd_CS"/>
</dbReference>
<dbReference type="InterPro" id="IPR010505">
    <property type="entry name" value="MoaA_twitch"/>
</dbReference>
<dbReference type="InterPro" id="IPR050105">
    <property type="entry name" value="MoCo_biosynth_MoaA/MoaC"/>
</dbReference>
<dbReference type="InterPro" id="IPR007197">
    <property type="entry name" value="rSAM"/>
</dbReference>
<dbReference type="NCBIfam" id="TIGR02666">
    <property type="entry name" value="moaA"/>
    <property type="match status" value="1"/>
</dbReference>
<dbReference type="PANTHER" id="PTHR22960:SF28">
    <property type="entry name" value="GTP 3',8-CYCLASE"/>
    <property type="match status" value="1"/>
</dbReference>
<dbReference type="PANTHER" id="PTHR22960">
    <property type="entry name" value="MOLYBDOPTERIN COFACTOR SYNTHESIS PROTEIN A"/>
    <property type="match status" value="1"/>
</dbReference>
<dbReference type="Pfam" id="PF13353">
    <property type="entry name" value="Fer4_12"/>
    <property type="match status" value="1"/>
</dbReference>
<dbReference type="Pfam" id="PF06463">
    <property type="entry name" value="Mob_synth_C"/>
    <property type="match status" value="1"/>
</dbReference>
<dbReference type="Pfam" id="PF04055">
    <property type="entry name" value="Radical_SAM"/>
    <property type="match status" value="1"/>
</dbReference>
<dbReference type="SFLD" id="SFLDG01383">
    <property type="entry name" value="cyclic_pyranopterin_phosphate"/>
    <property type="match status" value="1"/>
</dbReference>
<dbReference type="SFLD" id="SFLDG01386">
    <property type="entry name" value="main_SPASM_domain-containing"/>
    <property type="match status" value="1"/>
</dbReference>
<dbReference type="SMART" id="SM00729">
    <property type="entry name" value="Elp3"/>
    <property type="match status" value="1"/>
</dbReference>
<dbReference type="SUPFAM" id="SSF102114">
    <property type="entry name" value="Radical SAM enzymes"/>
    <property type="match status" value="1"/>
</dbReference>
<dbReference type="PROSITE" id="PS01305">
    <property type="entry name" value="MOAA_NIFB_PQQE"/>
    <property type="match status" value="1"/>
</dbReference>
<dbReference type="PROSITE" id="PS51918">
    <property type="entry name" value="RADICAL_SAM"/>
    <property type="match status" value="1"/>
</dbReference>
<comment type="function">
    <text evidence="1">Catalyzes the cyclization of GTP to (8S)-3',8-cyclo-7,8-dihydroguanosine 5'-triphosphate.</text>
</comment>
<comment type="catalytic activity">
    <reaction evidence="1">
        <text>GTP + AH2 + S-adenosyl-L-methionine = (8S)-3',8-cyclo-7,8-dihydroguanosine 5'-triphosphate + 5'-deoxyadenosine + L-methionine + A + H(+)</text>
        <dbReference type="Rhea" id="RHEA:49576"/>
        <dbReference type="ChEBI" id="CHEBI:13193"/>
        <dbReference type="ChEBI" id="CHEBI:15378"/>
        <dbReference type="ChEBI" id="CHEBI:17319"/>
        <dbReference type="ChEBI" id="CHEBI:17499"/>
        <dbReference type="ChEBI" id="CHEBI:37565"/>
        <dbReference type="ChEBI" id="CHEBI:57844"/>
        <dbReference type="ChEBI" id="CHEBI:59789"/>
        <dbReference type="ChEBI" id="CHEBI:131766"/>
        <dbReference type="EC" id="4.1.99.22"/>
    </reaction>
</comment>
<comment type="cofactor">
    <cofactor evidence="1">
        <name>[4Fe-4S] cluster</name>
        <dbReference type="ChEBI" id="CHEBI:49883"/>
    </cofactor>
    <text evidence="1">Binds 2 [4Fe-4S] clusters. Binds 1 [4Fe-4S] cluster coordinated with 3 cysteines and an exchangeable S-adenosyl-L-methionine and 1 [4Fe-4S] cluster coordinated with 3 cysteines and the GTP-derived substrate.</text>
</comment>
<comment type="pathway">
    <text evidence="1">Cofactor biosynthesis; molybdopterin biosynthesis.</text>
</comment>
<comment type="subunit">
    <text evidence="1">Monomer and homodimer.</text>
</comment>
<comment type="similarity">
    <text evidence="1">Belongs to the radical SAM superfamily. MoaA family.</text>
</comment>
<evidence type="ECO:0000255" key="1">
    <source>
        <dbReference type="HAMAP-Rule" id="MF_01225"/>
    </source>
</evidence>
<evidence type="ECO:0000255" key="2">
    <source>
        <dbReference type="PROSITE-ProRule" id="PRU01266"/>
    </source>
</evidence>
<proteinExistence type="inferred from homology"/>
<reference key="1">
    <citation type="submission" date="2009-03" db="EMBL/GenBank/DDBJ databases">
        <title>Complete genome sequence of Edwardsiella ictaluri 93-146.</title>
        <authorList>
            <person name="Williams M.L."/>
            <person name="Gillaspy A.F."/>
            <person name="Dyer D.W."/>
            <person name="Thune R.L."/>
            <person name="Waldbieser G.C."/>
            <person name="Schuster S.C."/>
            <person name="Gipson J."/>
            <person name="Zaitshik J."/>
            <person name="Landry C."/>
            <person name="Lawrence M.L."/>
        </authorList>
    </citation>
    <scope>NUCLEOTIDE SEQUENCE [LARGE SCALE GENOMIC DNA]</scope>
    <source>
        <strain>93-146</strain>
    </source>
</reference>
<keyword id="KW-0004">4Fe-4S</keyword>
<keyword id="KW-0342">GTP-binding</keyword>
<keyword id="KW-0408">Iron</keyword>
<keyword id="KW-0411">Iron-sulfur</keyword>
<keyword id="KW-0456">Lyase</keyword>
<keyword id="KW-0479">Metal-binding</keyword>
<keyword id="KW-0501">Molybdenum cofactor biosynthesis</keyword>
<keyword id="KW-0547">Nucleotide-binding</keyword>
<keyword id="KW-0949">S-adenosyl-L-methionine</keyword>
<gene>
    <name evidence="1" type="primary">moaA</name>
    <name type="ordered locus">NT01EI_2640</name>
</gene>